<protein>
    <recommendedName>
        <fullName>GDSL esterase/lipase At2g19050</fullName>
        <ecNumber>3.1.1.-</ecNumber>
    </recommendedName>
    <alternativeName>
        <fullName>Extracellular lipase At2g19050</fullName>
    </alternativeName>
</protein>
<organism>
    <name type="scientific">Arabidopsis thaliana</name>
    <name type="common">Mouse-ear cress</name>
    <dbReference type="NCBI Taxonomy" id="3702"/>
    <lineage>
        <taxon>Eukaryota</taxon>
        <taxon>Viridiplantae</taxon>
        <taxon>Streptophyta</taxon>
        <taxon>Embryophyta</taxon>
        <taxon>Tracheophyta</taxon>
        <taxon>Spermatophyta</taxon>
        <taxon>Magnoliopsida</taxon>
        <taxon>eudicotyledons</taxon>
        <taxon>Gunneridae</taxon>
        <taxon>Pentapetalae</taxon>
        <taxon>rosids</taxon>
        <taxon>malvids</taxon>
        <taxon>Brassicales</taxon>
        <taxon>Brassicaceae</taxon>
        <taxon>Camelineae</taxon>
        <taxon>Arabidopsis</taxon>
    </lineage>
</organism>
<dbReference type="EC" id="3.1.1.-"/>
<dbReference type="EMBL" id="AC002392">
    <property type="protein sequence ID" value="AAD12023.1"/>
    <property type="molecule type" value="Genomic_DNA"/>
</dbReference>
<dbReference type="EMBL" id="CP002685">
    <property type="protein sequence ID" value="AEC06843.1"/>
    <property type="molecule type" value="Genomic_DNA"/>
</dbReference>
<dbReference type="PIR" id="T00525">
    <property type="entry name" value="T00525"/>
</dbReference>
<dbReference type="RefSeq" id="NP_179495.1">
    <property type="nucleotide sequence ID" value="NM_127462.2"/>
</dbReference>
<dbReference type="SMR" id="O64468"/>
<dbReference type="FunCoup" id="O64468">
    <property type="interactions" value="94"/>
</dbReference>
<dbReference type="STRING" id="3702.O64468"/>
<dbReference type="GlyGen" id="O64468">
    <property type="glycosylation" value="1 site"/>
</dbReference>
<dbReference type="PaxDb" id="3702-AT2G19050.1"/>
<dbReference type="ProteomicsDB" id="221973"/>
<dbReference type="EnsemblPlants" id="AT2G19050.1">
    <property type="protein sequence ID" value="AT2G19050.1"/>
    <property type="gene ID" value="AT2G19050"/>
</dbReference>
<dbReference type="GeneID" id="816422"/>
<dbReference type="Gramene" id="AT2G19050.1">
    <property type="protein sequence ID" value="AT2G19050.1"/>
    <property type="gene ID" value="AT2G19050"/>
</dbReference>
<dbReference type="KEGG" id="ath:AT2G19050"/>
<dbReference type="Araport" id="AT2G19050"/>
<dbReference type="TAIR" id="AT2G19050"/>
<dbReference type="eggNOG" id="ENOG502SIA8">
    <property type="taxonomic scope" value="Eukaryota"/>
</dbReference>
<dbReference type="HOGENOM" id="CLU_015101_0_0_1"/>
<dbReference type="InParanoid" id="O64468"/>
<dbReference type="OMA" id="SCCTVKP"/>
<dbReference type="PhylomeDB" id="O64468"/>
<dbReference type="BioCyc" id="ARA:AT2G19050-MONOMER"/>
<dbReference type="PRO" id="PR:O64468"/>
<dbReference type="Proteomes" id="UP000006548">
    <property type="component" value="Chromosome 2"/>
</dbReference>
<dbReference type="ExpressionAtlas" id="O64468">
    <property type="expression patterns" value="baseline and differential"/>
</dbReference>
<dbReference type="GO" id="GO:0005576">
    <property type="term" value="C:extracellular region"/>
    <property type="evidence" value="ECO:0007669"/>
    <property type="project" value="UniProtKB-SubCell"/>
</dbReference>
<dbReference type="GO" id="GO:0016788">
    <property type="term" value="F:hydrolase activity, acting on ester bonds"/>
    <property type="evidence" value="ECO:0007669"/>
    <property type="project" value="InterPro"/>
</dbReference>
<dbReference type="GO" id="GO:0016042">
    <property type="term" value="P:lipid catabolic process"/>
    <property type="evidence" value="ECO:0007669"/>
    <property type="project" value="UniProtKB-KW"/>
</dbReference>
<dbReference type="CDD" id="cd01837">
    <property type="entry name" value="SGNH_plant_lipase_like"/>
    <property type="match status" value="1"/>
</dbReference>
<dbReference type="Gene3D" id="3.40.50.1110">
    <property type="entry name" value="SGNH hydrolase"/>
    <property type="match status" value="1"/>
</dbReference>
<dbReference type="InterPro" id="IPR001087">
    <property type="entry name" value="GDSL"/>
</dbReference>
<dbReference type="InterPro" id="IPR051238">
    <property type="entry name" value="GDSL_esterase/lipase"/>
</dbReference>
<dbReference type="InterPro" id="IPR036514">
    <property type="entry name" value="SGNH_hydro_sf"/>
</dbReference>
<dbReference type="InterPro" id="IPR035669">
    <property type="entry name" value="SGNH_plant_lipase-like"/>
</dbReference>
<dbReference type="PANTHER" id="PTHR45650:SF21">
    <property type="entry name" value="GDSL ESTERASE_LIPASE"/>
    <property type="match status" value="1"/>
</dbReference>
<dbReference type="PANTHER" id="PTHR45650">
    <property type="entry name" value="GDSL-LIKE LIPASE/ACYLHYDROLASE-RELATED"/>
    <property type="match status" value="1"/>
</dbReference>
<dbReference type="Pfam" id="PF00657">
    <property type="entry name" value="Lipase_GDSL"/>
    <property type="match status" value="1"/>
</dbReference>
<dbReference type="SUPFAM" id="SSF52266">
    <property type="entry name" value="SGNH hydrolase"/>
    <property type="match status" value="1"/>
</dbReference>
<name>GDL36_ARATH</name>
<reference key="1">
    <citation type="journal article" date="1999" name="Nature">
        <title>Sequence and analysis of chromosome 2 of the plant Arabidopsis thaliana.</title>
        <authorList>
            <person name="Lin X."/>
            <person name="Kaul S."/>
            <person name="Rounsley S.D."/>
            <person name="Shea T.P."/>
            <person name="Benito M.-I."/>
            <person name="Town C.D."/>
            <person name="Fujii C.Y."/>
            <person name="Mason T.M."/>
            <person name="Bowman C.L."/>
            <person name="Barnstead M.E."/>
            <person name="Feldblyum T.V."/>
            <person name="Buell C.R."/>
            <person name="Ketchum K.A."/>
            <person name="Lee J.J."/>
            <person name="Ronning C.M."/>
            <person name="Koo H.L."/>
            <person name="Moffat K.S."/>
            <person name="Cronin L.A."/>
            <person name="Shen M."/>
            <person name="Pai G."/>
            <person name="Van Aken S."/>
            <person name="Umayam L."/>
            <person name="Tallon L.J."/>
            <person name="Gill J.E."/>
            <person name="Adams M.D."/>
            <person name="Carrera A.J."/>
            <person name="Creasy T.H."/>
            <person name="Goodman H.M."/>
            <person name="Somerville C.R."/>
            <person name="Copenhaver G.P."/>
            <person name="Preuss D."/>
            <person name="Nierman W.C."/>
            <person name="White O."/>
            <person name="Eisen J.A."/>
            <person name="Salzberg S.L."/>
            <person name="Fraser C.M."/>
            <person name="Venter J.C."/>
        </authorList>
    </citation>
    <scope>NUCLEOTIDE SEQUENCE [LARGE SCALE GENOMIC DNA]</scope>
    <source>
        <strain>cv. Columbia</strain>
    </source>
</reference>
<reference key="2">
    <citation type="journal article" date="2017" name="Plant J.">
        <title>Araport11: a complete reannotation of the Arabidopsis thaliana reference genome.</title>
        <authorList>
            <person name="Cheng C.Y."/>
            <person name="Krishnakumar V."/>
            <person name="Chan A.P."/>
            <person name="Thibaud-Nissen F."/>
            <person name="Schobel S."/>
            <person name="Town C.D."/>
        </authorList>
    </citation>
    <scope>GENOME REANNOTATION</scope>
    <source>
        <strain>cv. Columbia</strain>
    </source>
</reference>
<reference key="3">
    <citation type="journal article" date="2004" name="Prog. Lipid Res.">
        <title>GDSL family of serine esterases/lipases.</title>
        <authorList>
            <person name="Akoh C.C."/>
            <person name="Lee G.-C."/>
            <person name="Liaw Y.-C."/>
            <person name="Huang T.-H."/>
            <person name="Shaw J.-F."/>
        </authorList>
    </citation>
    <scope>REVIEW</scope>
</reference>
<reference key="4">
    <citation type="journal article" date="2008" name="Pak. J. Biol. Sci.">
        <title>Sequence analysis of GDSL lipase gene family in Arabidopsis thaliana.</title>
        <authorList>
            <person name="Ling H."/>
        </authorList>
    </citation>
    <scope>GENE FAMILY</scope>
</reference>
<gene>
    <name type="ordered locus">At2g19050</name>
    <name type="ORF">T20K24.6</name>
</gene>
<proteinExistence type="inferred from homology"/>
<accession>O64468</accession>
<comment type="subcellular location">
    <subcellularLocation>
        <location evidence="3">Secreted</location>
    </subcellularLocation>
</comment>
<comment type="similarity">
    <text evidence="3">Belongs to the 'GDSL' lipolytic enzyme family.</text>
</comment>
<evidence type="ECO:0000250" key="1"/>
<evidence type="ECO:0000255" key="2"/>
<evidence type="ECO:0000305" key="3"/>
<feature type="signal peptide" evidence="2">
    <location>
        <begin position="1"/>
        <end position="23"/>
    </location>
</feature>
<feature type="chain" id="PRO_0000367377" description="GDSL esterase/lipase At2g19050">
    <location>
        <begin position="24"/>
        <end position="349"/>
    </location>
</feature>
<feature type="active site" description="Nucleophile" evidence="1">
    <location>
        <position position="38"/>
    </location>
</feature>
<feature type="active site" evidence="1">
    <location>
        <position position="316"/>
    </location>
</feature>
<feature type="active site" evidence="1">
    <location>
        <position position="319"/>
    </location>
</feature>
<feature type="glycosylation site" description="N-linked (GlcNAc...) asparagine" evidence="2">
    <location>
        <position position="49"/>
    </location>
</feature>
<keyword id="KW-0325">Glycoprotein</keyword>
<keyword id="KW-0378">Hydrolase</keyword>
<keyword id="KW-0442">Lipid degradation</keyword>
<keyword id="KW-0443">Lipid metabolism</keyword>
<keyword id="KW-1185">Reference proteome</keyword>
<keyword id="KW-0964">Secreted</keyword>
<keyword id="KW-0732">Signal</keyword>
<sequence>MAEAIFKALLLVIATTAFATTEAALGQRVPCYFVFGDSVFDNGNNNVLNTSAKVNYSPYGIDFARGPTGRFSNGRNIPDIIAELMRFSDYIPPFTGASPEQAHIGINYASGGGGIREETSQHLGEIISFKKQIKNHRSMIMTAKVPEEKLNKCLYTINIGSNDYLNNYFMPAPYMTNKKFSFDEYADSLIRSYRSYLKSLYVLGARKVAVFGVSKLGCTPRMIASHGGGNGCAAEVNKAVEPFNKNLKALVYEFNRDFADAKFTFVDIFSGQSPFAFFMLGFRVTDKSCCTVKPGEELCATNEPVCPVQRRYVYWDNVHSTEAANMVVAKAAYAGLITSPYSLSWLARL</sequence>